<dbReference type="EMBL" id="CP000117">
    <property type="protein sequence ID" value="ABA23054.1"/>
    <property type="molecule type" value="Genomic_DNA"/>
</dbReference>
<dbReference type="RefSeq" id="WP_010997577.1">
    <property type="nucleotide sequence ID" value="NC_007413.1"/>
</dbReference>
<dbReference type="SMR" id="Q3M7I2"/>
<dbReference type="STRING" id="240292.Ava_3447"/>
<dbReference type="GeneID" id="58726234"/>
<dbReference type="KEGG" id="ava:Ava_3447"/>
<dbReference type="eggNOG" id="COG0291">
    <property type="taxonomic scope" value="Bacteria"/>
</dbReference>
<dbReference type="HOGENOM" id="CLU_169643_4_0_3"/>
<dbReference type="Proteomes" id="UP000002533">
    <property type="component" value="Chromosome"/>
</dbReference>
<dbReference type="GO" id="GO:0022625">
    <property type="term" value="C:cytosolic large ribosomal subunit"/>
    <property type="evidence" value="ECO:0007669"/>
    <property type="project" value="TreeGrafter"/>
</dbReference>
<dbReference type="GO" id="GO:0003735">
    <property type="term" value="F:structural constituent of ribosome"/>
    <property type="evidence" value="ECO:0007669"/>
    <property type="project" value="InterPro"/>
</dbReference>
<dbReference type="GO" id="GO:0006412">
    <property type="term" value="P:translation"/>
    <property type="evidence" value="ECO:0007669"/>
    <property type="project" value="UniProtKB-UniRule"/>
</dbReference>
<dbReference type="FunFam" id="4.10.410.60:FF:000001">
    <property type="entry name" value="50S ribosomal protein L35"/>
    <property type="match status" value="1"/>
</dbReference>
<dbReference type="Gene3D" id="4.10.410.60">
    <property type="match status" value="1"/>
</dbReference>
<dbReference type="HAMAP" id="MF_00514">
    <property type="entry name" value="Ribosomal_bL35"/>
    <property type="match status" value="1"/>
</dbReference>
<dbReference type="InterPro" id="IPR001706">
    <property type="entry name" value="Ribosomal_bL35"/>
</dbReference>
<dbReference type="InterPro" id="IPR021137">
    <property type="entry name" value="Ribosomal_bL35-like"/>
</dbReference>
<dbReference type="InterPro" id="IPR018265">
    <property type="entry name" value="Ribosomal_bL35_CS"/>
</dbReference>
<dbReference type="InterPro" id="IPR037229">
    <property type="entry name" value="Ribosomal_bL35_sf"/>
</dbReference>
<dbReference type="NCBIfam" id="TIGR00001">
    <property type="entry name" value="rpmI_bact"/>
    <property type="match status" value="1"/>
</dbReference>
<dbReference type="PANTHER" id="PTHR33343">
    <property type="entry name" value="54S RIBOSOMAL PROTEIN BL35M"/>
    <property type="match status" value="1"/>
</dbReference>
<dbReference type="PANTHER" id="PTHR33343:SF1">
    <property type="entry name" value="LARGE RIBOSOMAL SUBUNIT PROTEIN BL35M"/>
    <property type="match status" value="1"/>
</dbReference>
<dbReference type="Pfam" id="PF01632">
    <property type="entry name" value="Ribosomal_L35p"/>
    <property type="match status" value="1"/>
</dbReference>
<dbReference type="PRINTS" id="PR00064">
    <property type="entry name" value="RIBOSOMALL35"/>
</dbReference>
<dbReference type="SUPFAM" id="SSF143034">
    <property type="entry name" value="L35p-like"/>
    <property type="match status" value="1"/>
</dbReference>
<dbReference type="PROSITE" id="PS00936">
    <property type="entry name" value="RIBOSOMAL_L35"/>
    <property type="match status" value="1"/>
</dbReference>
<reference key="1">
    <citation type="journal article" date="2014" name="Stand. Genomic Sci.">
        <title>Complete genome sequence of Anabaena variabilis ATCC 29413.</title>
        <authorList>
            <person name="Thiel T."/>
            <person name="Pratte B.S."/>
            <person name="Zhong J."/>
            <person name="Goodwin L."/>
            <person name="Copeland A."/>
            <person name="Lucas S."/>
            <person name="Han C."/>
            <person name="Pitluck S."/>
            <person name="Land M.L."/>
            <person name="Kyrpides N.C."/>
            <person name="Woyke T."/>
        </authorList>
    </citation>
    <scope>NUCLEOTIDE SEQUENCE [LARGE SCALE GENOMIC DNA]</scope>
    <source>
        <strain>ATCC 29413 / PCC 7937</strain>
    </source>
</reference>
<name>RL35_TRIV2</name>
<gene>
    <name evidence="1" type="primary">rpmI</name>
    <name evidence="1" type="synonym">rpl35</name>
    <name type="ordered locus">Ava_3447</name>
</gene>
<accession>Q3M7I2</accession>
<sequence length="65" mass="7696">MPKLKTRKAAAKRFRATGTGKIVRRKAFKNHLLEHKTTNKKRQFSKMAIVNERDEENVRLMLPYL</sequence>
<feature type="chain" id="PRO_0000258629" description="Large ribosomal subunit protein bL35">
    <location>
        <begin position="1"/>
        <end position="65"/>
    </location>
</feature>
<evidence type="ECO:0000255" key="1">
    <source>
        <dbReference type="HAMAP-Rule" id="MF_00514"/>
    </source>
</evidence>
<evidence type="ECO:0000305" key="2"/>
<proteinExistence type="inferred from homology"/>
<keyword id="KW-0687">Ribonucleoprotein</keyword>
<keyword id="KW-0689">Ribosomal protein</keyword>
<organism>
    <name type="scientific">Trichormus variabilis (strain ATCC 29413 / PCC 7937)</name>
    <name type="common">Anabaena variabilis</name>
    <dbReference type="NCBI Taxonomy" id="240292"/>
    <lineage>
        <taxon>Bacteria</taxon>
        <taxon>Bacillati</taxon>
        <taxon>Cyanobacteriota</taxon>
        <taxon>Cyanophyceae</taxon>
        <taxon>Nostocales</taxon>
        <taxon>Nostocaceae</taxon>
        <taxon>Trichormus</taxon>
    </lineage>
</organism>
<comment type="similarity">
    <text evidence="1">Belongs to the bacterial ribosomal protein bL35 family.</text>
</comment>
<protein>
    <recommendedName>
        <fullName evidence="1">Large ribosomal subunit protein bL35</fullName>
    </recommendedName>
    <alternativeName>
        <fullName evidence="2">50S ribosomal protein L35</fullName>
    </alternativeName>
</protein>